<accession>Q4ZMR1</accession>
<gene>
    <name evidence="1" type="primary">rpsE</name>
    <name type="ordered locus">Psyr_4531</name>
</gene>
<proteinExistence type="inferred from homology"/>
<keyword id="KW-0687">Ribonucleoprotein</keyword>
<keyword id="KW-0689">Ribosomal protein</keyword>
<keyword id="KW-0694">RNA-binding</keyword>
<keyword id="KW-0699">rRNA-binding</keyword>
<protein>
    <recommendedName>
        <fullName evidence="1">Small ribosomal subunit protein uS5</fullName>
    </recommendedName>
    <alternativeName>
        <fullName evidence="2">30S ribosomal protein S5</fullName>
    </alternativeName>
</protein>
<dbReference type="EMBL" id="CP000075">
    <property type="protein sequence ID" value="AAY39561.1"/>
    <property type="molecule type" value="Genomic_DNA"/>
</dbReference>
<dbReference type="RefSeq" id="WP_003317099.1">
    <property type="nucleotide sequence ID" value="NC_007005.1"/>
</dbReference>
<dbReference type="RefSeq" id="YP_237599.1">
    <property type="nucleotide sequence ID" value="NC_007005.1"/>
</dbReference>
<dbReference type="SMR" id="Q4ZMR1"/>
<dbReference type="STRING" id="205918.Psyr_4531"/>
<dbReference type="GeneID" id="96221013"/>
<dbReference type="KEGG" id="psb:Psyr_4531"/>
<dbReference type="PATRIC" id="fig|205918.7.peg.4670"/>
<dbReference type="eggNOG" id="COG0098">
    <property type="taxonomic scope" value="Bacteria"/>
</dbReference>
<dbReference type="HOGENOM" id="CLU_065898_2_2_6"/>
<dbReference type="OrthoDB" id="9809045at2"/>
<dbReference type="Proteomes" id="UP000000426">
    <property type="component" value="Chromosome"/>
</dbReference>
<dbReference type="GO" id="GO:0015935">
    <property type="term" value="C:small ribosomal subunit"/>
    <property type="evidence" value="ECO:0007669"/>
    <property type="project" value="InterPro"/>
</dbReference>
<dbReference type="GO" id="GO:0019843">
    <property type="term" value="F:rRNA binding"/>
    <property type="evidence" value="ECO:0007669"/>
    <property type="project" value="UniProtKB-UniRule"/>
</dbReference>
<dbReference type="GO" id="GO:0003735">
    <property type="term" value="F:structural constituent of ribosome"/>
    <property type="evidence" value="ECO:0007669"/>
    <property type="project" value="InterPro"/>
</dbReference>
<dbReference type="GO" id="GO:0006412">
    <property type="term" value="P:translation"/>
    <property type="evidence" value="ECO:0007669"/>
    <property type="project" value="UniProtKB-UniRule"/>
</dbReference>
<dbReference type="FunFam" id="3.30.160.20:FF:000001">
    <property type="entry name" value="30S ribosomal protein S5"/>
    <property type="match status" value="1"/>
</dbReference>
<dbReference type="FunFam" id="3.30.230.10:FF:000002">
    <property type="entry name" value="30S ribosomal protein S5"/>
    <property type="match status" value="1"/>
</dbReference>
<dbReference type="Gene3D" id="3.30.160.20">
    <property type="match status" value="1"/>
</dbReference>
<dbReference type="Gene3D" id="3.30.230.10">
    <property type="match status" value="1"/>
</dbReference>
<dbReference type="HAMAP" id="MF_01307_B">
    <property type="entry name" value="Ribosomal_uS5_B"/>
    <property type="match status" value="1"/>
</dbReference>
<dbReference type="InterPro" id="IPR020568">
    <property type="entry name" value="Ribosomal_Su5_D2-typ_SF"/>
</dbReference>
<dbReference type="InterPro" id="IPR000851">
    <property type="entry name" value="Ribosomal_uS5"/>
</dbReference>
<dbReference type="InterPro" id="IPR005712">
    <property type="entry name" value="Ribosomal_uS5_bac-type"/>
</dbReference>
<dbReference type="InterPro" id="IPR005324">
    <property type="entry name" value="Ribosomal_uS5_C"/>
</dbReference>
<dbReference type="InterPro" id="IPR013810">
    <property type="entry name" value="Ribosomal_uS5_N"/>
</dbReference>
<dbReference type="InterPro" id="IPR018192">
    <property type="entry name" value="Ribosomal_uS5_N_CS"/>
</dbReference>
<dbReference type="InterPro" id="IPR014721">
    <property type="entry name" value="Ribsml_uS5_D2-typ_fold_subgr"/>
</dbReference>
<dbReference type="NCBIfam" id="TIGR01021">
    <property type="entry name" value="rpsE_bact"/>
    <property type="match status" value="1"/>
</dbReference>
<dbReference type="PANTHER" id="PTHR48432">
    <property type="entry name" value="S5 DRBM DOMAIN-CONTAINING PROTEIN"/>
    <property type="match status" value="1"/>
</dbReference>
<dbReference type="PANTHER" id="PTHR48432:SF1">
    <property type="entry name" value="S5 DRBM DOMAIN-CONTAINING PROTEIN"/>
    <property type="match status" value="1"/>
</dbReference>
<dbReference type="Pfam" id="PF00333">
    <property type="entry name" value="Ribosomal_S5"/>
    <property type="match status" value="1"/>
</dbReference>
<dbReference type="Pfam" id="PF03719">
    <property type="entry name" value="Ribosomal_S5_C"/>
    <property type="match status" value="1"/>
</dbReference>
<dbReference type="SUPFAM" id="SSF54768">
    <property type="entry name" value="dsRNA-binding domain-like"/>
    <property type="match status" value="1"/>
</dbReference>
<dbReference type="SUPFAM" id="SSF54211">
    <property type="entry name" value="Ribosomal protein S5 domain 2-like"/>
    <property type="match status" value="1"/>
</dbReference>
<dbReference type="PROSITE" id="PS00585">
    <property type="entry name" value="RIBOSOMAL_S5"/>
    <property type="match status" value="1"/>
</dbReference>
<dbReference type="PROSITE" id="PS50881">
    <property type="entry name" value="S5_DSRBD"/>
    <property type="match status" value="1"/>
</dbReference>
<name>RS5_PSEU2</name>
<feature type="chain" id="PRO_0000230363" description="Small ribosomal subunit protein uS5">
    <location>
        <begin position="1"/>
        <end position="166"/>
    </location>
</feature>
<feature type="domain" description="S5 DRBM" evidence="1">
    <location>
        <begin position="12"/>
        <end position="75"/>
    </location>
</feature>
<evidence type="ECO:0000255" key="1">
    <source>
        <dbReference type="HAMAP-Rule" id="MF_01307"/>
    </source>
</evidence>
<evidence type="ECO:0000305" key="2"/>
<comment type="function">
    <text evidence="1">With S4 and S12 plays an important role in translational accuracy.</text>
</comment>
<comment type="function">
    <text evidence="1">Located at the back of the 30S subunit body where it stabilizes the conformation of the head with respect to the body.</text>
</comment>
<comment type="subunit">
    <text evidence="1">Part of the 30S ribosomal subunit. Contacts proteins S4 and S8.</text>
</comment>
<comment type="domain">
    <text>The N-terminal domain interacts with the head of the 30S subunit; the C-terminal domain interacts with the body and contacts protein S4. The interaction surface between S4 and S5 is involved in control of translational fidelity.</text>
</comment>
<comment type="similarity">
    <text evidence="1">Belongs to the universal ribosomal protein uS5 family.</text>
</comment>
<reference key="1">
    <citation type="journal article" date="2005" name="Proc. Natl. Acad. Sci. U.S.A.">
        <title>Comparison of the complete genome sequences of Pseudomonas syringae pv. syringae B728a and pv. tomato DC3000.</title>
        <authorList>
            <person name="Feil H."/>
            <person name="Feil W.S."/>
            <person name="Chain P."/>
            <person name="Larimer F."/>
            <person name="Dibartolo G."/>
            <person name="Copeland A."/>
            <person name="Lykidis A."/>
            <person name="Trong S."/>
            <person name="Nolan M."/>
            <person name="Goltsman E."/>
            <person name="Thiel J."/>
            <person name="Malfatti S."/>
            <person name="Loper J.E."/>
            <person name="Lapidus A."/>
            <person name="Detter J.C."/>
            <person name="Land M."/>
            <person name="Richardson P.M."/>
            <person name="Kyrpides N.C."/>
            <person name="Ivanova N."/>
            <person name="Lindow S.E."/>
        </authorList>
    </citation>
    <scope>NUCLEOTIDE SEQUENCE [LARGE SCALE GENOMIC DNA]</scope>
    <source>
        <strain>B728a</strain>
    </source>
</reference>
<organism>
    <name type="scientific">Pseudomonas syringae pv. syringae (strain B728a)</name>
    <dbReference type="NCBI Taxonomy" id="205918"/>
    <lineage>
        <taxon>Bacteria</taxon>
        <taxon>Pseudomonadati</taxon>
        <taxon>Pseudomonadota</taxon>
        <taxon>Gammaproteobacteria</taxon>
        <taxon>Pseudomonadales</taxon>
        <taxon>Pseudomonadaceae</taxon>
        <taxon>Pseudomonas</taxon>
        <taxon>Pseudomonas syringae</taxon>
    </lineage>
</organism>
<sequence length="166" mass="17733">MSNHDQKRDEGYIEKLVQVNRVAKTVKGGRIFTFTALTVVGDGKGRVGFGRGKSREVPAAIQKAMEAARRNMIQVDLNGTTLQYAMKSAHGASKVYMQPASEGTGIIAGGAMRAVLEVAGVQNVLAKCYGSTNPVNVVHATFKGLKGMQSPESIAAKRGKRVEEII</sequence>